<feature type="chain" id="PRO_1000132581" description="Adenosylcobinamide-GDP ribazoletransferase">
    <location>
        <begin position="1"/>
        <end position="247"/>
    </location>
</feature>
<feature type="transmembrane region" description="Helical" evidence="1">
    <location>
        <begin position="34"/>
        <end position="54"/>
    </location>
</feature>
<feature type="transmembrane region" description="Helical" evidence="1">
    <location>
        <begin position="59"/>
        <end position="79"/>
    </location>
</feature>
<feature type="transmembrane region" description="Helical" evidence="1">
    <location>
        <begin position="113"/>
        <end position="133"/>
    </location>
</feature>
<feature type="transmembrane region" description="Helical" evidence="1">
    <location>
        <begin position="138"/>
        <end position="158"/>
    </location>
</feature>
<feature type="transmembrane region" description="Helical" evidence="1">
    <location>
        <begin position="194"/>
        <end position="214"/>
    </location>
</feature>
<sequence>MSKLFWAMLSFITRLPVPRRWSQGLDFEHYSRGIITFPLIGLLLGAISGLVFMVLQAWCGVPLAALFSVLVLALMTGGFHLDGLADTCDGVFSARSRDRMLEIMRDSRLGTHGGLALIFVVLAKILVLSELALRGEPILASLAAACAVSRGTAALLMYRHRYAREEGLGNVFIGKIDGRQTCVTLGLAAIFAAVLLPGMHGVAAMVVTMVAIFILGQLLKRTLGGQTGDTLGAAIELGELVFLLALL</sequence>
<name>COBS_ECOSM</name>
<keyword id="KW-0997">Cell inner membrane</keyword>
<keyword id="KW-1003">Cell membrane</keyword>
<keyword id="KW-0169">Cobalamin biosynthesis</keyword>
<keyword id="KW-0460">Magnesium</keyword>
<keyword id="KW-0472">Membrane</keyword>
<keyword id="KW-0808">Transferase</keyword>
<keyword id="KW-0812">Transmembrane</keyword>
<keyword id="KW-1133">Transmembrane helix</keyword>
<dbReference type="EC" id="2.7.8.26" evidence="1"/>
<dbReference type="EMBL" id="CP000970">
    <property type="protein sequence ID" value="ACB17190.1"/>
    <property type="molecule type" value="Genomic_DNA"/>
</dbReference>
<dbReference type="RefSeq" id="WP_001297350.1">
    <property type="nucleotide sequence ID" value="NC_010498.1"/>
</dbReference>
<dbReference type="GeneID" id="93775192"/>
<dbReference type="KEGG" id="ecm:EcSMS35_1132"/>
<dbReference type="HOGENOM" id="CLU_057426_1_1_6"/>
<dbReference type="UniPathway" id="UPA00148">
    <property type="reaction ID" value="UER00238"/>
</dbReference>
<dbReference type="Proteomes" id="UP000007011">
    <property type="component" value="Chromosome"/>
</dbReference>
<dbReference type="GO" id="GO:0005886">
    <property type="term" value="C:plasma membrane"/>
    <property type="evidence" value="ECO:0007669"/>
    <property type="project" value="UniProtKB-SubCell"/>
</dbReference>
<dbReference type="GO" id="GO:0051073">
    <property type="term" value="F:adenosylcobinamide-GDP ribazoletransferase activity"/>
    <property type="evidence" value="ECO:0007669"/>
    <property type="project" value="UniProtKB-UniRule"/>
</dbReference>
<dbReference type="GO" id="GO:0008818">
    <property type="term" value="F:cobalamin 5'-phosphate synthase activity"/>
    <property type="evidence" value="ECO:0007669"/>
    <property type="project" value="UniProtKB-UniRule"/>
</dbReference>
<dbReference type="GO" id="GO:0009236">
    <property type="term" value="P:cobalamin biosynthetic process"/>
    <property type="evidence" value="ECO:0007669"/>
    <property type="project" value="UniProtKB-UniRule"/>
</dbReference>
<dbReference type="HAMAP" id="MF_00719">
    <property type="entry name" value="CobS"/>
    <property type="match status" value="1"/>
</dbReference>
<dbReference type="InterPro" id="IPR003805">
    <property type="entry name" value="CobS"/>
</dbReference>
<dbReference type="NCBIfam" id="TIGR00317">
    <property type="entry name" value="cobS"/>
    <property type="match status" value="1"/>
</dbReference>
<dbReference type="PANTHER" id="PTHR34148">
    <property type="entry name" value="ADENOSYLCOBINAMIDE-GDP RIBAZOLETRANSFERASE"/>
    <property type="match status" value="1"/>
</dbReference>
<dbReference type="PANTHER" id="PTHR34148:SF1">
    <property type="entry name" value="ADENOSYLCOBINAMIDE-GDP RIBAZOLETRANSFERASE"/>
    <property type="match status" value="1"/>
</dbReference>
<dbReference type="Pfam" id="PF02654">
    <property type="entry name" value="CobS"/>
    <property type="match status" value="1"/>
</dbReference>
<proteinExistence type="inferred from homology"/>
<comment type="function">
    <text evidence="1">Joins adenosylcobinamide-GDP and alpha-ribazole to generate adenosylcobalamin (Ado-cobalamin). Also synthesizes adenosylcobalamin 5'-phosphate from adenosylcobinamide-GDP and alpha-ribazole 5'-phosphate.</text>
</comment>
<comment type="catalytic activity">
    <reaction evidence="1">
        <text>alpha-ribazole + adenosylcob(III)inamide-GDP = adenosylcob(III)alamin + GMP + H(+)</text>
        <dbReference type="Rhea" id="RHEA:16049"/>
        <dbReference type="ChEBI" id="CHEBI:10329"/>
        <dbReference type="ChEBI" id="CHEBI:15378"/>
        <dbReference type="ChEBI" id="CHEBI:18408"/>
        <dbReference type="ChEBI" id="CHEBI:58115"/>
        <dbReference type="ChEBI" id="CHEBI:60487"/>
        <dbReference type="EC" id="2.7.8.26"/>
    </reaction>
</comment>
<comment type="catalytic activity">
    <reaction evidence="1">
        <text>alpha-ribazole 5'-phosphate + adenosylcob(III)inamide-GDP = adenosylcob(III)alamin 5'-phosphate + GMP + H(+)</text>
        <dbReference type="Rhea" id="RHEA:23560"/>
        <dbReference type="ChEBI" id="CHEBI:15378"/>
        <dbReference type="ChEBI" id="CHEBI:57918"/>
        <dbReference type="ChEBI" id="CHEBI:58115"/>
        <dbReference type="ChEBI" id="CHEBI:60487"/>
        <dbReference type="ChEBI" id="CHEBI:60493"/>
        <dbReference type="EC" id="2.7.8.26"/>
    </reaction>
</comment>
<comment type="cofactor">
    <cofactor evidence="1">
        <name>Mg(2+)</name>
        <dbReference type="ChEBI" id="CHEBI:18420"/>
    </cofactor>
</comment>
<comment type="pathway">
    <text evidence="1">Cofactor biosynthesis; adenosylcobalamin biosynthesis; adenosylcobalamin from cob(II)yrinate a,c-diamide: step 7/7.</text>
</comment>
<comment type="subcellular location">
    <subcellularLocation>
        <location evidence="1">Cell inner membrane</location>
        <topology evidence="1">Multi-pass membrane protein</topology>
    </subcellularLocation>
</comment>
<comment type="similarity">
    <text evidence="1">Belongs to the CobS family.</text>
</comment>
<accession>B1LPV6</accession>
<reference key="1">
    <citation type="journal article" date="2008" name="J. Bacteriol.">
        <title>Insights into the environmental resistance gene pool from the genome sequence of the multidrug-resistant environmental isolate Escherichia coli SMS-3-5.</title>
        <authorList>
            <person name="Fricke W.F."/>
            <person name="Wright M.S."/>
            <person name="Lindell A.H."/>
            <person name="Harkins D.M."/>
            <person name="Baker-Austin C."/>
            <person name="Ravel J."/>
            <person name="Stepanauskas R."/>
        </authorList>
    </citation>
    <scope>NUCLEOTIDE SEQUENCE [LARGE SCALE GENOMIC DNA]</scope>
    <source>
        <strain>SMS-3-5 / SECEC</strain>
    </source>
</reference>
<evidence type="ECO:0000255" key="1">
    <source>
        <dbReference type="HAMAP-Rule" id="MF_00719"/>
    </source>
</evidence>
<gene>
    <name evidence="1" type="primary">cobS</name>
    <name type="ordered locus">EcSMS35_1132</name>
</gene>
<organism>
    <name type="scientific">Escherichia coli (strain SMS-3-5 / SECEC)</name>
    <dbReference type="NCBI Taxonomy" id="439855"/>
    <lineage>
        <taxon>Bacteria</taxon>
        <taxon>Pseudomonadati</taxon>
        <taxon>Pseudomonadota</taxon>
        <taxon>Gammaproteobacteria</taxon>
        <taxon>Enterobacterales</taxon>
        <taxon>Enterobacteriaceae</taxon>
        <taxon>Escherichia</taxon>
    </lineage>
</organism>
<protein>
    <recommendedName>
        <fullName evidence="1">Adenosylcobinamide-GDP ribazoletransferase</fullName>
        <ecNumber evidence="1">2.7.8.26</ecNumber>
    </recommendedName>
    <alternativeName>
        <fullName evidence="1">Cobalamin synthase</fullName>
    </alternativeName>
    <alternativeName>
        <fullName evidence="1">Cobalamin-5'-phosphate synthase</fullName>
    </alternativeName>
</protein>